<sequence>MFALSNNLNRVNACMDGFLARIRSHVDAHAPELRSLFDTMAAEARFARDWLSEDLARLPVGAALLEVGGGVLLLSCQLAAEGFDITAIEPTGEGFGKFRQLGDIVLELAAARPTIAPCKAEDFISEKRFDFAFSLNVMEHIDLPDEAVRRVSEVLKPGASYHFLCPNYVFPYEPHFNIPTFFTKELTCRVMRHRIEGNTGMDDPKGVWRSLNWITVPKVKRFAAKDATLTLRFHRAMLVWMLERALTDKEFAGRRAQWMVAAIRSAVKLRVHHLAGYVPATLQPIMDVRLTKR</sequence>
<dbReference type="EMBL" id="AL123456">
    <property type="protein sequence ID" value="CCP44273.1"/>
    <property type="molecule type" value="Genomic_DNA"/>
</dbReference>
<dbReference type="PIR" id="H70713">
    <property type="entry name" value="H70713"/>
</dbReference>
<dbReference type="RefSeq" id="NP_216025.1">
    <property type="nucleotide sequence ID" value="NC_000962.3"/>
</dbReference>
<dbReference type="RefSeq" id="WP_003407632.1">
    <property type="nucleotide sequence ID" value="NZ_NVQJ01000004.1"/>
</dbReference>
<dbReference type="STRING" id="83332.Rv1509"/>
<dbReference type="PaxDb" id="83332-Rv1509"/>
<dbReference type="DNASU" id="886475"/>
<dbReference type="GeneID" id="886475"/>
<dbReference type="KEGG" id="mtu:Rv1509"/>
<dbReference type="KEGG" id="mtv:RVBD_1509"/>
<dbReference type="TubercuList" id="Rv1509"/>
<dbReference type="eggNOG" id="COG2227">
    <property type="taxonomic scope" value="Bacteria"/>
</dbReference>
<dbReference type="InParanoid" id="P9WLW3"/>
<dbReference type="OrthoDB" id="9810247at2"/>
<dbReference type="Proteomes" id="UP000001584">
    <property type="component" value="Chromosome"/>
</dbReference>
<dbReference type="GO" id="GO:0008168">
    <property type="term" value="F:methyltransferase activity"/>
    <property type="evidence" value="ECO:0000318"/>
    <property type="project" value="GO_Central"/>
</dbReference>
<dbReference type="CDD" id="cd02440">
    <property type="entry name" value="AdoMet_MTases"/>
    <property type="match status" value="1"/>
</dbReference>
<dbReference type="Gene3D" id="3.40.50.150">
    <property type="entry name" value="Vaccinia Virus protein VP39"/>
    <property type="match status" value="1"/>
</dbReference>
<dbReference type="InterPro" id="IPR029063">
    <property type="entry name" value="SAM-dependent_MTases_sf"/>
</dbReference>
<dbReference type="Pfam" id="PF13489">
    <property type="entry name" value="Methyltransf_23"/>
    <property type="match status" value="1"/>
</dbReference>
<dbReference type="SUPFAM" id="SSF53335">
    <property type="entry name" value="S-adenosyl-L-methionine-dependent methyltransferases"/>
    <property type="match status" value="1"/>
</dbReference>
<organism>
    <name type="scientific">Mycobacterium tuberculosis (strain ATCC 25618 / H37Rv)</name>
    <dbReference type="NCBI Taxonomy" id="83332"/>
    <lineage>
        <taxon>Bacteria</taxon>
        <taxon>Bacillati</taxon>
        <taxon>Actinomycetota</taxon>
        <taxon>Actinomycetes</taxon>
        <taxon>Mycobacteriales</taxon>
        <taxon>Mycobacteriaceae</taxon>
        <taxon>Mycobacterium</taxon>
        <taxon>Mycobacterium tuberculosis complex</taxon>
    </lineage>
</organism>
<reference key="1">
    <citation type="journal article" date="1998" name="Nature">
        <title>Deciphering the biology of Mycobacterium tuberculosis from the complete genome sequence.</title>
        <authorList>
            <person name="Cole S.T."/>
            <person name="Brosch R."/>
            <person name="Parkhill J."/>
            <person name="Garnier T."/>
            <person name="Churcher C.M."/>
            <person name="Harris D.E."/>
            <person name="Gordon S.V."/>
            <person name="Eiglmeier K."/>
            <person name="Gas S."/>
            <person name="Barry C.E. III"/>
            <person name="Tekaia F."/>
            <person name="Badcock K."/>
            <person name="Basham D."/>
            <person name="Brown D."/>
            <person name="Chillingworth T."/>
            <person name="Connor R."/>
            <person name="Davies R.M."/>
            <person name="Devlin K."/>
            <person name="Feltwell T."/>
            <person name="Gentles S."/>
            <person name="Hamlin N."/>
            <person name="Holroyd S."/>
            <person name="Hornsby T."/>
            <person name="Jagels K."/>
            <person name="Krogh A."/>
            <person name="McLean J."/>
            <person name="Moule S."/>
            <person name="Murphy L.D."/>
            <person name="Oliver S."/>
            <person name="Osborne J."/>
            <person name="Quail M.A."/>
            <person name="Rajandream M.A."/>
            <person name="Rogers J."/>
            <person name="Rutter S."/>
            <person name="Seeger K."/>
            <person name="Skelton S."/>
            <person name="Squares S."/>
            <person name="Squares R."/>
            <person name="Sulston J.E."/>
            <person name="Taylor K."/>
            <person name="Whitehead S."/>
            <person name="Barrell B.G."/>
        </authorList>
    </citation>
    <scope>NUCLEOTIDE SEQUENCE [LARGE SCALE GENOMIC DNA]</scope>
    <source>
        <strain>ATCC 25618 / H37Rv</strain>
    </source>
</reference>
<keyword id="KW-1185">Reference proteome</keyword>
<feature type="chain" id="PRO_0000103863" description="Uncharacterized protein Rv1509">
    <location>
        <begin position="1"/>
        <end position="293"/>
    </location>
</feature>
<accession>P9WLW3</accession>
<accession>L0T9U6</accession>
<accession>P71788</accession>
<gene>
    <name type="ordered locus">Rv1509</name>
    <name type="ORF">MTCY277.31</name>
</gene>
<name>Y1509_MYCTU</name>
<proteinExistence type="predicted"/>
<protein>
    <recommendedName>
        <fullName>Uncharacterized protein Rv1509</fullName>
    </recommendedName>
</protein>